<proteinExistence type="evidence at protein level"/>
<organism>
    <name type="scientific">Staphylococcus aureus (strain Newman)</name>
    <dbReference type="NCBI Taxonomy" id="426430"/>
    <lineage>
        <taxon>Bacteria</taxon>
        <taxon>Bacillati</taxon>
        <taxon>Bacillota</taxon>
        <taxon>Bacilli</taxon>
        <taxon>Bacillales</taxon>
        <taxon>Staphylococcaceae</taxon>
        <taxon>Staphylococcus</taxon>
    </lineage>
</organism>
<reference key="1">
    <citation type="journal article" date="2008" name="J. Bacteriol.">
        <title>Genome sequence of Staphylococcus aureus strain Newman and comparative analysis of staphylococcal genomes: polymorphism and evolution of two major pathogenicity islands.</title>
        <authorList>
            <person name="Baba T."/>
            <person name="Bae T."/>
            <person name="Schneewind O."/>
            <person name="Takeuchi F."/>
            <person name="Hiramatsu K."/>
        </authorList>
    </citation>
    <scope>NUCLEOTIDE SEQUENCE [LARGE SCALE GENOMIC DNA]</scope>
    <source>
        <strain>Newman</strain>
    </source>
</reference>
<reference key="2">
    <citation type="journal article" date="2011" name="J. Bacteriol.">
        <title>EsaD, a secretion factor for the Ess pathway in Staphylococcus aureus.</title>
        <authorList>
            <person name="Anderson M."/>
            <person name="Chen Y.H."/>
            <person name="Butler E.K."/>
            <person name="Missiakas D.M."/>
        </authorList>
    </citation>
    <scope>FUNCTION IN VIRULENCE</scope>
    <scope>SUBCELLULAR LOCATION</scope>
    <scope>INDUCTION</scope>
    <scope>DISRUPTION PHENOTYPE</scope>
    <source>
        <strain>Newman</strain>
    </source>
</reference>
<comment type="function">
    <text evidence="1 3">Component of the type VII secretion system (Ess) (Probable). Plays a role in Ess secretion during infection. Required for the efficient secretion of EsxA. Required for abscess formation and staphylococcal persistence in host tissue (PubMed:21278286). Possesses a toxic DNase activity that is modulated by EssG by forming a nuclease toxin-antitoxin pair. This nuclease toxin targets competitor bacteria (By similarity).</text>
</comment>
<comment type="subunit">
    <text evidence="1">Interacts (via C-terminal) with EssG; this interaction blocks EssD activity. Interacts with EssE.</text>
</comment>
<comment type="subcellular location">
    <subcellularLocation>
        <location evidence="1">Secreted</location>
    </subcellularLocation>
    <subcellularLocation>
        <location evidence="3">Cell membrane</location>
    </subcellularLocation>
    <text evidence="1">Released from the cell in a form that is immediately active while EssG partner protein remains in the producing cell where it may potentially serve further protective functions.</text>
</comment>
<comment type="induction">
    <text evidence="3">Expression is activated by mutations in esaB and essB (newman).</text>
</comment>
<comment type="disruption phenotype">
    <text evidence="3">Deletions mutants generate fewer abscesses with a reduced bacterial load compared to wild-type strain.</text>
</comment>
<comment type="similarity">
    <text evidence="5">Belongs to the EssD family.</text>
</comment>
<dbReference type="EMBL" id="AP009351">
    <property type="protein sequence ID" value="BAF66500.1"/>
    <property type="molecule type" value="Genomic_DNA"/>
</dbReference>
<dbReference type="SMR" id="A0A0H3KDT7"/>
<dbReference type="KEGG" id="sae:NWMN_0228"/>
<dbReference type="HOGENOM" id="CLU_031044_1_0_9"/>
<dbReference type="Proteomes" id="UP000006386">
    <property type="component" value="Chromosome"/>
</dbReference>
<dbReference type="GO" id="GO:0005576">
    <property type="term" value="C:extracellular region"/>
    <property type="evidence" value="ECO:0007669"/>
    <property type="project" value="UniProtKB-SubCell"/>
</dbReference>
<dbReference type="GO" id="GO:0005886">
    <property type="term" value="C:plasma membrane"/>
    <property type="evidence" value="ECO:0007669"/>
    <property type="project" value="UniProtKB-SubCell"/>
</dbReference>
<dbReference type="Gene3D" id="3.40.570.10">
    <property type="entry name" value="Extracellular Endonuclease, subunit A"/>
    <property type="match status" value="1"/>
</dbReference>
<dbReference type="InterPro" id="IPR051768">
    <property type="entry name" value="Bact_secretion_toxin"/>
</dbReference>
<dbReference type="InterPro" id="IPR044929">
    <property type="entry name" value="DNA/RNA_non-sp_Endonuclease_sf"/>
</dbReference>
<dbReference type="InterPro" id="IPR044927">
    <property type="entry name" value="Endonuclea_NS_2"/>
</dbReference>
<dbReference type="InterPro" id="IPR027797">
    <property type="entry name" value="PT-TG_dom"/>
</dbReference>
<dbReference type="PANTHER" id="PTHR34976">
    <property type="entry name" value="RIBONUCLEASE YQCG-RELATED"/>
    <property type="match status" value="1"/>
</dbReference>
<dbReference type="PANTHER" id="PTHR34976:SF2">
    <property type="entry name" value="TYPE VII SECRETION SYSTEM PROTEIN ESSD"/>
    <property type="match status" value="1"/>
</dbReference>
<dbReference type="Pfam" id="PF13930">
    <property type="entry name" value="Endonuclea_NS_2"/>
    <property type="match status" value="1"/>
</dbReference>
<dbReference type="Pfam" id="PF14449">
    <property type="entry name" value="PT-TG"/>
    <property type="match status" value="1"/>
</dbReference>
<name>ESSD_STAAE</name>
<evidence type="ECO:0000250" key="1">
    <source>
        <dbReference type="UniProtKB" id="Q2G179"/>
    </source>
</evidence>
<evidence type="ECO:0000256" key="2">
    <source>
        <dbReference type="SAM" id="MobiDB-lite"/>
    </source>
</evidence>
<evidence type="ECO:0000269" key="3">
    <source>
    </source>
</evidence>
<evidence type="ECO:0000303" key="4">
    <source>
    </source>
</evidence>
<evidence type="ECO:0000305" key="5"/>
<evidence type="ECO:0000312" key="6">
    <source>
        <dbReference type="EMBL" id="BAF66500.1"/>
    </source>
</evidence>
<feature type="chain" id="PRO_0000437418" description="Type VII secretion systems protein EssD">
    <location>
        <begin position="1"/>
        <end position="617"/>
    </location>
</feature>
<feature type="region of interest" description="Disordered" evidence="2">
    <location>
        <begin position="420"/>
        <end position="448"/>
    </location>
</feature>
<feature type="compositionally biased region" description="Basic and acidic residues" evidence="2">
    <location>
        <begin position="426"/>
        <end position="438"/>
    </location>
</feature>
<sequence length="617" mass="68702">MHDMTKDIEYLTADYDNEKSSIQSVIDAIEGQDFLDVDTTMDDAVSDVSSLDEDGAISLTSSVVGPQGSKLMGYYQNELYDYASQLDSKMKEIIDTPFIEDIDKAFKGITNVKLENILIKNGGGHGRDTYGASGKIAKGDAKKSDSDVYSIDEILKSDQEFVKVIDQHYKEMKKEDKKLSKSDFEKMMTQGASCDYMTVAEAEELEEQKKKEEAIEIAALAGMVVLSCINPVAGAVAIGAYSAYSAANAATGKNIVTGRKLSKEERIMEGLSLIPLPGMGFLKGAGKSLMKLGFKGGEKFAVKTGLQKTMQQAVSRISPKMGMMKNSVLNQSRNFAQNTHVGQMLSNMRGQATHTVQQSRNWIGQQAQNVKRIVNNGLDKEIAHPFKQQLAPAGMGGIKFAETTTLRNMGQNIKRAVTPQNHVTHGPKDSMVRSEGKHSISSHEMNSSKYVESPNYTKVEFGEHYARLRPKKLKANIEYTTPTGHIYRTDHKGRIKEVYVDNLSLKDGDRNSHAQRTVGGEDRLPDDDGGHLIARMFGGSKDIDNLVAQSKFINRPFKEKGHWYNLEKEWQEFLNSGKEVKNIKMEVKYSGNSQRPTIFKVEYEINGERNIRRILNK</sequence>
<gene>
    <name evidence="4" type="primary">essD</name>
    <name type="synonym">esaD</name>
    <name evidence="6" type="ordered locus">NWMN_0228</name>
</gene>
<keyword id="KW-1003">Cell membrane</keyword>
<keyword id="KW-0472">Membrane</keyword>
<keyword id="KW-0964">Secreted</keyword>
<keyword id="KW-0843">Virulence</keyword>
<protein>
    <recommendedName>
        <fullName evidence="5">Type VII secretion systems protein EssD</fullName>
    </recommendedName>
    <alternativeName>
        <fullName evidence="4">Ess-associated gene D</fullName>
    </alternativeName>
    <alternativeName>
        <fullName>Nuclease toxin EssD</fullName>
    </alternativeName>
</protein>
<accession>A0A0H3KDT7</accession>